<proteinExistence type="inferred from homology"/>
<name>RL19_RICPU</name>
<evidence type="ECO:0000255" key="1">
    <source>
        <dbReference type="HAMAP-Rule" id="MF_00402"/>
    </source>
</evidence>
<evidence type="ECO:0000305" key="2"/>
<reference key="1">
    <citation type="journal article" date="2009" name="PLoS ONE">
        <title>Genome sequence of the endosymbiont Rickettsia peacockii and comparison with virulent Rickettsia rickettsii: identification of virulence factors.</title>
        <authorList>
            <person name="Felsheim R.F."/>
            <person name="Kurtti T.J."/>
            <person name="Munderloh U.G."/>
        </authorList>
    </citation>
    <scope>NUCLEOTIDE SEQUENCE [LARGE SCALE GENOMIC DNA]</scope>
    <source>
        <strain>Rustic</strain>
    </source>
</reference>
<gene>
    <name evidence="1" type="primary">rplS</name>
    <name type="ordered locus">RPR_02890</name>
</gene>
<feature type="chain" id="PRO_1000205901" description="Large ribosomal subunit protein bL19">
    <location>
        <begin position="1"/>
        <end position="138"/>
    </location>
</feature>
<accession>C4K1C9</accession>
<comment type="function">
    <text evidence="1">This protein is located at the 30S-50S ribosomal subunit interface and may play a role in the structure and function of the aminoacyl-tRNA binding site.</text>
</comment>
<comment type="similarity">
    <text evidence="1">Belongs to the bacterial ribosomal protein bL19 family.</text>
</comment>
<keyword id="KW-0687">Ribonucleoprotein</keyword>
<keyword id="KW-0689">Ribosomal protein</keyword>
<sequence>MNIIDRFEQENISKRTANKKIPDFEAGDTVKVTVKIVDRSIEKDGKEKLTERFQAYEGVVIAKRNRSITSSFLVRKISHGEGVERRFMTYSPIVHSIDVVKYGVVRRAKLYYLRNRSGKSARIKERHIPIAKTKAAKA</sequence>
<organism>
    <name type="scientific">Rickettsia peacockii (strain Rustic)</name>
    <dbReference type="NCBI Taxonomy" id="562019"/>
    <lineage>
        <taxon>Bacteria</taxon>
        <taxon>Pseudomonadati</taxon>
        <taxon>Pseudomonadota</taxon>
        <taxon>Alphaproteobacteria</taxon>
        <taxon>Rickettsiales</taxon>
        <taxon>Rickettsiaceae</taxon>
        <taxon>Rickettsieae</taxon>
        <taxon>Rickettsia</taxon>
        <taxon>spotted fever group</taxon>
    </lineage>
</organism>
<dbReference type="EMBL" id="CP001227">
    <property type="protein sequence ID" value="ACR47380.1"/>
    <property type="molecule type" value="Genomic_DNA"/>
</dbReference>
<dbReference type="RefSeq" id="WP_012736633.1">
    <property type="nucleotide sequence ID" value="NC_012730.1"/>
</dbReference>
<dbReference type="SMR" id="C4K1C9"/>
<dbReference type="KEGG" id="rpk:RPR_02890"/>
<dbReference type="HOGENOM" id="CLU_103507_1_0_5"/>
<dbReference type="Proteomes" id="UP000005015">
    <property type="component" value="Chromosome"/>
</dbReference>
<dbReference type="GO" id="GO:0022625">
    <property type="term" value="C:cytosolic large ribosomal subunit"/>
    <property type="evidence" value="ECO:0007669"/>
    <property type="project" value="TreeGrafter"/>
</dbReference>
<dbReference type="GO" id="GO:0003735">
    <property type="term" value="F:structural constituent of ribosome"/>
    <property type="evidence" value="ECO:0007669"/>
    <property type="project" value="InterPro"/>
</dbReference>
<dbReference type="GO" id="GO:0006412">
    <property type="term" value="P:translation"/>
    <property type="evidence" value="ECO:0007669"/>
    <property type="project" value="UniProtKB-UniRule"/>
</dbReference>
<dbReference type="Gene3D" id="2.30.30.790">
    <property type="match status" value="1"/>
</dbReference>
<dbReference type="HAMAP" id="MF_00402">
    <property type="entry name" value="Ribosomal_bL19"/>
    <property type="match status" value="1"/>
</dbReference>
<dbReference type="InterPro" id="IPR001857">
    <property type="entry name" value="Ribosomal_bL19"/>
</dbReference>
<dbReference type="InterPro" id="IPR018257">
    <property type="entry name" value="Ribosomal_bL19_CS"/>
</dbReference>
<dbReference type="InterPro" id="IPR038657">
    <property type="entry name" value="Ribosomal_bL19_sf"/>
</dbReference>
<dbReference type="InterPro" id="IPR008991">
    <property type="entry name" value="Translation_prot_SH3-like_sf"/>
</dbReference>
<dbReference type="NCBIfam" id="TIGR01024">
    <property type="entry name" value="rplS_bact"/>
    <property type="match status" value="1"/>
</dbReference>
<dbReference type="PANTHER" id="PTHR15680:SF9">
    <property type="entry name" value="LARGE RIBOSOMAL SUBUNIT PROTEIN BL19M"/>
    <property type="match status" value="1"/>
</dbReference>
<dbReference type="PANTHER" id="PTHR15680">
    <property type="entry name" value="RIBOSOMAL PROTEIN L19"/>
    <property type="match status" value="1"/>
</dbReference>
<dbReference type="Pfam" id="PF01245">
    <property type="entry name" value="Ribosomal_L19"/>
    <property type="match status" value="1"/>
</dbReference>
<dbReference type="PIRSF" id="PIRSF002191">
    <property type="entry name" value="Ribosomal_L19"/>
    <property type="match status" value="1"/>
</dbReference>
<dbReference type="PRINTS" id="PR00061">
    <property type="entry name" value="RIBOSOMALL19"/>
</dbReference>
<dbReference type="SUPFAM" id="SSF50104">
    <property type="entry name" value="Translation proteins SH3-like domain"/>
    <property type="match status" value="1"/>
</dbReference>
<dbReference type="PROSITE" id="PS01015">
    <property type="entry name" value="RIBOSOMAL_L19"/>
    <property type="match status" value="1"/>
</dbReference>
<protein>
    <recommendedName>
        <fullName evidence="1">Large ribosomal subunit protein bL19</fullName>
    </recommendedName>
    <alternativeName>
        <fullName evidence="2">50S ribosomal protein L19</fullName>
    </alternativeName>
</protein>